<dbReference type="EMBL" id="X12831">
    <property type="protein sequence ID" value="CAA31314.1"/>
    <property type="molecule type" value="Genomic_DNA"/>
</dbReference>
<dbReference type="PIR" id="S28102">
    <property type="entry name" value="S28102"/>
</dbReference>
<dbReference type="RefSeq" id="NP_943089.1">
    <property type="nucleotide sequence ID" value="NC_005243.1"/>
</dbReference>
<dbReference type="RefSeq" id="WP_002485664.1">
    <property type="nucleotide sequence ID" value="NZ_JQNU01000074.1"/>
</dbReference>
<dbReference type="RefSeq" id="YP_006937479.1">
    <property type="nucleotide sequence ID" value="NC_013306.1"/>
</dbReference>
<dbReference type="RefSeq" id="YP_006937484.1">
    <property type="nucleotide sequence ID" value="NC_013308.1"/>
</dbReference>
<dbReference type="SMR" id="P14491"/>
<dbReference type="InterPro" id="IPR005094">
    <property type="entry name" value="Endonuclease_MobA/VirD2"/>
</dbReference>
<dbReference type="Pfam" id="PF03432">
    <property type="entry name" value="Relaxase"/>
    <property type="match status" value="1"/>
</dbReference>
<geneLocation type="plasmid">
    <name>pC223</name>
</geneLocation>
<accession>P14491</accession>
<protein>
    <recommendedName>
        <fullName>Protein rlx</fullName>
    </recommendedName>
</protein>
<evidence type="ECO:0000256" key="1">
    <source>
        <dbReference type="SAM" id="MobiDB-lite"/>
    </source>
</evidence>
<sequence>MATTKISSTKSTSRAINYAEKRAEEKSALNCDIDYAKSSFKATREMYGKTDGNEGHVVIQSFKPNEVTPEQCNQLGLELAEKIAPNHQVAVYTHNDTDHVHNHIVINSIDLETGKKFNNNKKALHDIRQANDEICVSHNLSIPEEKAKLRYTQAEYSVLNKGKTSWKDEIRHAIDQSQAASYEELGNDLQQNGIKIERITDKTITYRHLEEDKKVRGKKLGEDYDKGGLEIGFNRQNEQREEQARQRELEQARREKIKRDKEREKEWARFNRSTQAIRQNRERSEREERERERKARELEEQNRRAREERARQERENKHTHEKTRGFDLEL</sequence>
<proteinExistence type="predicted"/>
<gene>
    <name type="primary">rlx</name>
</gene>
<feature type="chain" id="PRO_0000068437" description="Protein rlx">
    <location>
        <begin position="1"/>
        <end position="330"/>
    </location>
</feature>
<feature type="region of interest" description="Disordered" evidence="1">
    <location>
        <begin position="220"/>
        <end position="330"/>
    </location>
</feature>
<feature type="compositionally biased region" description="Basic and acidic residues" evidence="1">
    <location>
        <begin position="237"/>
        <end position="269"/>
    </location>
</feature>
<feature type="compositionally biased region" description="Basic and acidic residues" evidence="1">
    <location>
        <begin position="279"/>
        <end position="330"/>
    </location>
</feature>
<reference key="1">
    <citation type="submission" date="1988-09" db="EMBL/GenBank/DDBJ databases">
        <authorList>
            <person name="Dreher J."/>
            <person name="Matzura H."/>
        </authorList>
    </citation>
    <scope>NUCLEOTIDE SEQUENCE [GENOMIC DNA]</scope>
    <source>
        <strain>RN154</strain>
    </source>
</reference>
<keyword id="KW-0614">Plasmid</keyword>
<name>RLX3_STAAU</name>
<organism>
    <name type="scientific">Staphylococcus aureus</name>
    <dbReference type="NCBI Taxonomy" id="1280"/>
    <lineage>
        <taxon>Bacteria</taxon>
        <taxon>Bacillati</taxon>
        <taxon>Bacillota</taxon>
        <taxon>Bacilli</taxon>
        <taxon>Bacillales</taxon>
        <taxon>Staphylococcaceae</taxon>
        <taxon>Staphylococcus</taxon>
    </lineage>
</organism>
<comment type="function">
    <text>This protein is probably required for relaxation complex formation and plasmid mobilization by conjugative plasmids.</text>
</comment>